<feature type="chain" id="PRO_0000150974" description="Zinc finger CCHC domain-containing protein 13">
    <location>
        <begin position="1"/>
        <end position="166"/>
    </location>
</feature>
<feature type="zinc finger region" description="CCHC-type 1; degenerate" evidence="1">
    <location>
        <begin position="4"/>
        <end position="21"/>
    </location>
</feature>
<feature type="zinc finger region" description="CCHC-type 2; degenerate" evidence="1">
    <location>
        <begin position="45"/>
        <end position="62"/>
    </location>
</feature>
<feature type="zinc finger region" description="CCHC-type 3" evidence="1">
    <location>
        <begin position="65"/>
        <end position="82"/>
    </location>
</feature>
<feature type="zinc finger region" description="CCHC-type 4" evidence="1">
    <location>
        <begin position="89"/>
        <end position="106"/>
    </location>
</feature>
<feature type="zinc finger region" description="CCHC-type 5" evidence="1">
    <location>
        <begin position="110"/>
        <end position="127"/>
    </location>
</feature>
<feature type="zinc finger region" description="CCHC-type 6" evidence="1">
    <location>
        <begin position="128"/>
        <end position="145"/>
    </location>
</feature>
<gene>
    <name type="primary">ZCCHC13</name>
</gene>
<protein>
    <recommendedName>
        <fullName>Zinc finger CCHC domain-containing protein 13</fullName>
    </recommendedName>
</protein>
<proteinExistence type="evidence at protein level"/>
<evidence type="ECO:0000255" key="1">
    <source>
        <dbReference type="PROSITE-ProRule" id="PRU00047"/>
    </source>
</evidence>
<keyword id="KW-0479">Metal-binding</keyword>
<keyword id="KW-1267">Proteomics identification</keyword>
<keyword id="KW-1185">Reference proteome</keyword>
<keyword id="KW-0677">Repeat</keyword>
<keyword id="KW-0862">Zinc</keyword>
<keyword id="KW-0863">Zinc-finger</keyword>
<comment type="interaction">
    <interactant intactId="EBI-954111">
        <id>Q8WW36</id>
    </interactant>
    <interactant intactId="EBI-11978177">
        <id>Q96NT3-2</id>
        <label>GUCD1</label>
    </interactant>
    <organismsDiffer>false</organismsDiffer>
    <experiments>3</experiments>
</comment>
<comment type="interaction">
    <interactant intactId="EBI-954111">
        <id>Q8WW36</id>
    </interactant>
    <interactant intactId="EBI-747107">
        <id>Q8IUQ4</id>
        <label>SIAH1</label>
    </interactant>
    <organismsDiffer>false</organismsDiffer>
    <experiments>3</experiments>
</comment>
<comment type="interaction">
    <interactant intactId="EBI-954111">
        <id>Q8WW36</id>
    </interactant>
    <interactant intactId="EBI-607085">
        <id>P09012</id>
        <label>SNRPA</label>
    </interactant>
    <organismsDiffer>false</organismsDiffer>
    <experiments>3</experiments>
</comment>
<comment type="interaction">
    <interactant intactId="EBI-954111">
        <id>Q8WW36</id>
    </interactant>
    <interactant intactId="EBI-10177272">
        <id>P15622-3</id>
        <label>ZNF250</label>
    </interactant>
    <organismsDiffer>false</organismsDiffer>
    <experiments>3</experiments>
</comment>
<comment type="interaction">
    <interactant intactId="EBI-954111">
        <id>Q8WW36</id>
    </interactant>
    <interactant intactId="EBI-11985915">
        <id>Q5T619</id>
        <label>ZNF648</label>
    </interactant>
    <organismsDiffer>false</organismsDiffer>
    <experiments>3</experiments>
</comment>
<reference key="1">
    <citation type="journal article" date="2004" name="Genome Res.">
        <title>The status, quality, and expansion of the NIH full-length cDNA project: the Mammalian Gene Collection (MGC).</title>
        <authorList>
            <consortium name="The MGC Project Team"/>
        </authorList>
    </citation>
    <scope>NUCLEOTIDE SEQUENCE [LARGE SCALE MRNA]</scope>
    <source>
        <tissue>Testis</tissue>
    </source>
</reference>
<sequence length="166" mass="18005">MSSKDFFACGHSGHWARGCPRGGAGGRRGGGHGRGSQCGSTTLSYTCYCCGESGRNAKNCVLLGNICYNCGRSGHIAKDCKDPKRERRQHCYTCGRLGHLARDCDRQKEQKCYSCGKLGHIQKDCAQVKCYRCGEIGHVAINCSKARPGQLLPLRQIPTSSQGMSQ</sequence>
<accession>Q8WW36</accession>
<organism>
    <name type="scientific">Homo sapiens</name>
    <name type="common">Human</name>
    <dbReference type="NCBI Taxonomy" id="9606"/>
    <lineage>
        <taxon>Eukaryota</taxon>
        <taxon>Metazoa</taxon>
        <taxon>Chordata</taxon>
        <taxon>Craniata</taxon>
        <taxon>Vertebrata</taxon>
        <taxon>Euteleostomi</taxon>
        <taxon>Mammalia</taxon>
        <taxon>Eutheria</taxon>
        <taxon>Euarchontoglires</taxon>
        <taxon>Primates</taxon>
        <taxon>Haplorrhini</taxon>
        <taxon>Catarrhini</taxon>
        <taxon>Hominidae</taxon>
        <taxon>Homo</taxon>
    </lineage>
</organism>
<dbReference type="EMBL" id="BC021176">
    <property type="protein sequence ID" value="AAH21176.1"/>
    <property type="molecule type" value="mRNA"/>
</dbReference>
<dbReference type="CCDS" id="CCDS14425.1"/>
<dbReference type="RefSeq" id="NP_976048.1">
    <property type="nucleotide sequence ID" value="NM_203303.3"/>
</dbReference>
<dbReference type="BioGRID" id="133309">
    <property type="interactions" value="6"/>
</dbReference>
<dbReference type="FunCoup" id="Q8WW36">
    <property type="interactions" value="1"/>
</dbReference>
<dbReference type="IntAct" id="Q8WW36">
    <property type="interactions" value="6"/>
</dbReference>
<dbReference type="STRING" id="9606.ENSP00000345633"/>
<dbReference type="GlyGen" id="Q8WW36">
    <property type="glycosylation" value="1 site, 1 N-linked glycan (1 site)"/>
</dbReference>
<dbReference type="iPTMnet" id="Q8WW36"/>
<dbReference type="PhosphoSitePlus" id="Q8WW36"/>
<dbReference type="BioMuta" id="ZCCHC13"/>
<dbReference type="DMDM" id="71152962"/>
<dbReference type="jPOST" id="Q8WW36"/>
<dbReference type="MassIVE" id="Q8WW36"/>
<dbReference type="PaxDb" id="9606-ENSP00000345633"/>
<dbReference type="PeptideAtlas" id="Q8WW36"/>
<dbReference type="Antibodypedia" id="28012">
    <property type="antibodies" value="64 antibodies from 15 providers"/>
</dbReference>
<dbReference type="DNASU" id="389874"/>
<dbReference type="Ensembl" id="ENST00000339534.4">
    <property type="protein sequence ID" value="ENSP00000345633.2"/>
    <property type="gene ID" value="ENSG00000187969.6"/>
</dbReference>
<dbReference type="GeneID" id="389874"/>
<dbReference type="KEGG" id="hsa:389874"/>
<dbReference type="MANE-Select" id="ENST00000339534.4">
    <property type="protein sequence ID" value="ENSP00000345633.2"/>
    <property type="RefSeq nucleotide sequence ID" value="NM_203303.3"/>
    <property type="RefSeq protein sequence ID" value="NP_976048.1"/>
</dbReference>
<dbReference type="UCSC" id="uc004ebs.5">
    <property type="organism name" value="human"/>
</dbReference>
<dbReference type="AGR" id="HGNC:31749"/>
<dbReference type="CTD" id="389874"/>
<dbReference type="DisGeNET" id="389874"/>
<dbReference type="GeneCards" id="ZCCHC13"/>
<dbReference type="HGNC" id="HGNC:31749">
    <property type="gene designation" value="ZCCHC13"/>
</dbReference>
<dbReference type="HPA" id="ENSG00000187969">
    <property type="expression patterns" value="Tissue enriched (testis)"/>
</dbReference>
<dbReference type="MIM" id="301125">
    <property type="type" value="gene"/>
</dbReference>
<dbReference type="neXtProt" id="NX_Q8WW36"/>
<dbReference type="OpenTargets" id="ENSG00000187969"/>
<dbReference type="PharmGKB" id="PA134926925"/>
<dbReference type="VEuPathDB" id="HostDB:ENSG00000187969"/>
<dbReference type="eggNOG" id="KOG4400">
    <property type="taxonomic scope" value="Eukaryota"/>
</dbReference>
<dbReference type="GeneTree" id="ENSGT00950000183041"/>
<dbReference type="HOGENOM" id="CLU_058879_4_0_1"/>
<dbReference type="InParanoid" id="Q8WW36"/>
<dbReference type="OMA" id="QKEQKCY"/>
<dbReference type="OrthoDB" id="427960at2759"/>
<dbReference type="PAN-GO" id="Q8WW36">
    <property type="GO annotations" value="5 GO annotations based on evolutionary models"/>
</dbReference>
<dbReference type="PhylomeDB" id="Q8WW36"/>
<dbReference type="TreeFam" id="TF316974"/>
<dbReference type="PathwayCommons" id="Q8WW36"/>
<dbReference type="SignaLink" id="Q8WW36"/>
<dbReference type="BioGRID-ORCS" id="389874">
    <property type="hits" value="15 hits in 765 CRISPR screens"/>
</dbReference>
<dbReference type="GenomeRNAi" id="389874"/>
<dbReference type="Pharos" id="Q8WW36">
    <property type="development level" value="Tdark"/>
</dbReference>
<dbReference type="PRO" id="PR:Q8WW36"/>
<dbReference type="Proteomes" id="UP000005640">
    <property type="component" value="Chromosome X"/>
</dbReference>
<dbReference type="RNAct" id="Q8WW36">
    <property type="molecule type" value="protein"/>
</dbReference>
<dbReference type="Bgee" id="ENSG00000187969">
    <property type="expression patterns" value="Expressed in male germ line stem cell (sensu Vertebrata) in testis and 13 other cell types or tissues"/>
</dbReference>
<dbReference type="GO" id="GO:0005737">
    <property type="term" value="C:cytoplasm"/>
    <property type="evidence" value="ECO:0000318"/>
    <property type="project" value="GO_Central"/>
</dbReference>
<dbReference type="GO" id="GO:0003729">
    <property type="term" value="F:mRNA binding"/>
    <property type="evidence" value="ECO:0000318"/>
    <property type="project" value="GO_Central"/>
</dbReference>
<dbReference type="GO" id="GO:0003727">
    <property type="term" value="F:single-stranded RNA binding"/>
    <property type="evidence" value="ECO:0000318"/>
    <property type="project" value="GO_Central"/>
</dbReference>
<dbReference type="GO" id="GO:0045182">
    <property type="term" value="F:translation regulator activity"/>
    <property type="evidence" value="ECO:0000318"/>
    <property type="project" value="GO_Central"/>
</dbReference>
<dbReference type="GO" id="GO:0008270">
    <property type="term" value="F:zinc ion binding"/>
    <property type="evidence" value="ECO:0007669"/>
    <property type="project" value="UniProtKB-KW"/>
</dbReference>
<dbReference type="GO" id="GO:2000767">
    <property type="term" value="P:positive regulation of cytoplasmic translation"/>
    <property type="evidence" value="ECO:0000318"/>
    <property type="project" value="GO_Central"/>
</dbReference>
<dbReference type="FunFam" id="4.10.60.10:FF:000002">
    <property type="entry name" value="cellular nucleic acid-binding protein-like isoform X1"/>
    <property type="match status" value="1"/>
</dbReference>
<dbReference type="FunFam" id="4.10.60.10:FF:000094">
    <property type="entry name" value="Zinc finger CCHC-type containing 13"/>
    <property type="match status" value="1"/>
</dbReference>
<dbReference type="Gene3D" id="4.10.60.10">
    <property type="entry name" value="Zinc finger, CCHC-type"/>
    <property type="match status" value="4"/>
</dbReference>
<dbReference type="InterPro" id="IPR001878">
    <property type="entry name" value="Znf_CCHC"/>
</dbReference>
<dbReference type="InterPro" id="IPR036875">
    <property type="entry name" value="Znf_CCHC_sf"/>
</dbReference>
<dbReference type="PANTHER" id="PTHR47103">
    <property type="entry name" value="DNA-BINDING PROTEIN"/>
    <property type="match status" value="1"/>
</dbReference>
<dbReference type="PANTHER" id="PTHR47103:SF8">
    <property type="entry name" value="DNA-BINDING PROTEIN"/>
    <property type="match status" value="1"/>
</dbReference>
<dbReference type="Pfam" id="PF00098">
    <property type="entry name" value="zf-CCHC"/>
    <property type="match status" value="4"/>
</dbReference>
<dbReference type="SMART" id="SM00343">
    <property type="entry name" value="ZnF_C2HC"/>
    <property type="match status" value="6"/>
</dbReference>
<dbReference type="SUPFAM" id="SSF57756">
    <property type="entry name" value="Retrovirus zinc finger-like domains"/>
    <property type="match status" value="3"/>
</dbReference>
<dbReference type="PROSITE" id="PS50158">
    <property type="entry name" value="ZF_CCHC"/>
    <property type="match status" value="4"/>
</dbReference>
<name>ZCH13_HUMAN</name>